<dbReference type="EC" id="2.7.2.3" evidence="1"/>
<dbReference type="EMBL" id="FM211187">
    <property type="protein sequence ID" value="CAR68299.1"/>
    <property type="molecule type" value="Genomic_DNA"/>
</dbReference>
<dbReference type="RefSeq" id="WP_001096743.1">
    <property type="nucleotide sequence ID" value="NC_011900.1"/>
</dbReference>
<dbReference type="SMR" id="B8ZLX5"/>
<dbReference type="KEGG" id="sne:SPN23F04530"/>
<dbReference type="HOGENOM" id="CLU_025427_0_1_9"/>
<dbReference type="UniPathway" id="UPA00109">
    <property type="reaction ID" value="UER00185"/>
</dbReference>
<dbReference type="GO" id="GO:0005829">
    <property type="term" value="C:cytosol"/>
    <property type="evidence" value="ECO:0007669"/>
    <property type="project" value="TreeGrafter"/>
</dbReference>
<dbReference type="GO" id="GO:0043531">
    <property type="term" value="F:ADP binding"/>
    <property type="evidence" value="ECO:0007669"/>
    <property type="project" value="TreeGrafter"/>
</dbReference>
<dbReference type="GO" id="GO:0005524">
    <property type="term" value="F:ATP binding"/>
    <property type="evidence" value="ECO:0007669"/>
    <property type="project" value="UniProtKB-KW"/>
</dbReference>
<dbReference type="GO" id="GO:0004618">
    <property type="term" value="F:phosphoglycerate kinase activity"/>
    <property type="evidence" value="ECO:0007669"/>
    <property type="project" value="UniProtKB-UniRule"/>
</dbReference>
<dbReference type="GO" id="GO:0006094">
    <property type="term" value="P:gluconeogenesis"/>
    <property type="evidence" value="ECO:0007669"/>
    <property type="project" value="TreeGrafter"/>
</dbReference>
<dbReference type="GO" id="GO:0006096">
    <property type="term" value="P:glycolytic process"/>
    <property type="evidence" value="ECO:0007669"/>
    <property type="project" value="UniProtKB-UniRule"/>
</dbReference>
<dbReference type="FunFam" id="3.40.50.1260:FF:000001">
    <property type="entry name" value="Phosphoglycerate kinase"/>
    <property type="match status" value="1"/>
</dbReference>
<dbReference type="FunFam" id="3.40.50.1260:FF:000008">
    <property type="entry name" value="Phosphoglycerate kinase"/>
    <property type="match status" value="1"/>
</dbReference>
<dbReference type="Gene3D" id="3.40.50.1260">
    <property type="entry name" value="Phosphoglycerate kinase, N-terminal domain"/>
    <property type="match status" value="2"/>
</dbReference>
<dbReference type="HAMAP" id="MF_00145">
    <property type="entry name" value="Phosphoglyc_kinase"/>
    <property type="match status" value="1"/>
</dbReference>
<dbReference type="InterPro" id="IPR001576">
    <property type="entry name" value="Phosphoglycerate_kinase"/>
</dbReference>
<dbReference type="InterPro" id="IPR015911">
    <property type="entry name" value="Phosphoglycerate_kinase_CS"/>
</dbReference>
<dbReference type="InterPro" id="IPR015824">
    <property type="entry name" value="Phosphoglycerate_kinase_N"/>
</dbReference>
<dbReference type="InterPro" id="IPR036043">
    <property type="entry name" value="Phosphoglycerate_kinase_sf"/>
</dbReference>
<dbReference type="PANTHER" id="PTHR11406">
    <property type="entry name" value="PHOSPHOGLYCERATE KINASE"/>
    <property type="match status" value="1"/>
</dbReference>
<dbReference type="PANTHER" id="PTHR11406:SF23">
    <property type="entry name" value="PHOSPHOGLYCERATE KINASE 1, CHLOROPLASTIC-RELATED"/>
    <property type="match status" value="1"/>
</dbReference>
<dbReference type="Pfam" id="PF00162">
    <property type="entry name" value="PGK"/>
    <property type="match status" value="1"/>
</dbReference>
<dbReference type="PIRSF" id="PIRSF000724">
    <property type="entry name" value="Pgk"/>
    <property type="match status" value="1"/>
</dbReference>
<dbReference type="PRINTS" id="PR00477">
    <property type="entry name" value="PHGLYCKINASE"/>
</dbReference>
<dbReference type="SUPFAM" id="SSF53748">
    <property type="entry name" value="Phosphoglycerate kinase"/>
    <property type="match status" value="1"/>
</dbReference>
<dbReference type="PROSITE" id="PS00111">
    <property type="entry name" value="PGLYCERATE_KINASE"/>
    <property type="match status" value="1"/>
</dbReference>
<keyword id="KW-0067">ATP-binding</keyword>
<keyword id="KW-0963">Cytoplasm</keyword>
<keyword id="KW-0324">Glycolysis</keyword>
<keyword id="KW-0418">Kinase</keyword>
<keyword id="KW-0547">Nucleotide-binding</keyword>
<keyword id="KW-0808">Transferase</keyword>
<protein>
    <recommendedName>
        <fullName evidence="1">Phosphoglycerate kinase</fullName>
        <ecNumber evidence="1">2.7.2.3</ecNumber>
    </recommendedName>
</protein>
<accession>B8ZLX5</accession>
<reference key="1">
    <citation type="journal article" date="2009" name="J. Bacteriol.">
        <title>Role of conjugative elements in the evolution of the multidrug-resistant pandemic clone Streptococcus pneumoniae Spain23F ST81.</title>
        <authorList>
            <person name="Croucher N.J."/>
            <person name="Walker D."/>
            <person name="Romero P."/>
            <person name="Lennard N."/>
            <person name="Paterson G.K."/>
            <person name="Bason N.C."/>
            <person name="Mitchell A.M."/>
            <person name="Quail M.A."/>
            <person name="Andrew P.W."/>
            <person name="Parkhill J."/>
            <person name="Bentley S.D."/>
            <person name="Mitchell T.J."/>
        </authorList>
    </citation>
    <scope>NUCLEOTIDE SEQUENCE [LARGE SCALE GENOMIC DNA]</scope>
    <source>
        <strain>ATCC 700669 / Spain 23F-1</strain>
    </source>
</reference>
<gene>
    <name evidence="1" type="primary">pgk</name>
    <name type="ordered locus">SPN23F04530</name>
</gene>
<feature type="chain" id="PRO_1000192852" description="Phosphoglycerate kinase">
    <location>
        <begin position="1"/>
        <end position="398"/>
    </location>
</feature>
<feature type="binding site" evidence="1">
    <location>
        <begin position="21"/>
        <end position="23"/>
    </location>
    <ligand>
        <name>substrate</name>
    </ligand>
</feature>
<feature type="binding site" evidence="1">
    <location>
        <position position="36"/>
    </location>
    <ligand>
        <name>substrate</name>
    </ligand>
</feature>
<feature type="binding site" evidence="1">
    <location>
        <begin position="59"/>
        <end position="62"/>
    </location>
    <ligand>
        <name>substrate</name>
    </ligand>
</feature>
<feature type="binding site" evidence="1">
    <location>
        <position position="119"/>
    </location>
    <ligand>
        <name>substrate</name>
    </ligand>
</feature>
<feature type="binding site" evidence="1">
    <location>
        <position position="157"/>
    </location>
    <ligand>
        <name>substrate</name>
    </ligand>
</feature>
<feature type="binding site" evidence="1">
    <location>
        <position position="208"/>
    </location>
    <ligand>
        <name>ATP</name>
        <dbReference type="ChEBI" id="CHEBI:30616"/>
    </ligand>
</feature>
<feature type="binding site" evidence="1">
    <location>
        <position position="296"/>
    </location>
    <ligand>
        <name>ATP</name>
        <dbReference type="ChEBI" id="CHEBI:30616"/>
    </ligand>
</feature>
<feature type="binding site" evidence="1">
    <location>
        <position position="327"/>
    </location>
    <ligand>
        <name>ATP</name>
        <dbReference type="ChEBI" id="CHEBI:30616"/>
    </ligand>
</feature>
<feature type="binding site" evidence="1">
    <location>
        <begin position="354"/>
        <end position="357"/>
    </location>
    <ligand>
        <name>ATP</name>
        <dbReference type="ChEBI" id="CHEBI:30616"/>
    </ligand>
</feature>
<sequence length="398" mass="41923">MAKLTVKDVDLKGKKVLVRVDFNVPLKDGVITNDNRITAALPTIKYIIEQGGRAILFSHLGRVKEEADKAGKSLAPVAADLAAKLGQDVVFPGVTRGAELEAAINALEDGQVLLVENTRYEDVDGKKESKNDPELGKYWASLGDGIFVNDAFGTAHRAHASNVGISANVEKAVAGFLLENEIAYIQEAVETPERPFVAILGGSKVSDKIGVIENLLEKADKVLIGGGMTYTFYKAQGIEIGNSLVEEDKLDVAKALLEKANGKLILPVDSKEANAFAGYTEVRDTEGEAVSEGFLGLDIGPKSIAKFDEALTGAKTVVWNGPMGVFENPDFQAGTIGVMDAIVKQPGVKSIIGGGDSAAAAINLGRADKFSWISTGGGASMELLEGKVLPGLAALTEK</sequence>
<name>PGK_STRPJ</name>
<evidence type="ECO:0000255" key="1">
    <source>
        <dbReference type="HAMAP-Rule" id="MF_00145"/>
    </source>
</evidence>
<comment type="catalytic activity">
    <reaction evidence="1">
        <text>(2R)-3-phosphoglycerate + ATP = (2R)-3-phospho-glyceroyl phosphate + ADP</text>
        <dbReference type="Rhea" id="RHEA:14801"/>
        <dbReference type="ChEBI" id="CHEBI:30616"/>
        <dbReference type="ChEBI" id="CHEBI:57604"/>
        <dbReference type="ChEBI" id="CHEBI:58272"/>
        <dbReference type="ChEBI" id="CHEBI:456216"/>
        <dbReference type="EC" id="2.7.2.3"/>
    </reaction>
</comment>
<comment type="pathway">
    <text evidence="1">Carbohydrate degradation; glycolysis; pyruvate from D-glyceraldehyde 3-phosphate: step 2/5.</text>
</comment>
<comment type="subunit">
    <text evidence="1">Monomer.</text>
</comment>
<comment type="subcellular location">
    <subcellularLocation>
        <location evidence="1">Cytoplasm</location>
    </subcellularLocation>
</comment>
<comment type="similarity">
    <text evidence="1">Belongs to the phosphoglycerate kinase family.</text>
</comment>
<organism>
    <name type="scientific">Streptococcus pneumoniae (strain ATCC 700669 / Spain 23F-1)</name>
    <dbReference type="NCBI Taxonomy" id="561276"/>
    <lineage>
        <taxon>Bacteria</taxon>
        <taxon>Bacillati</taxon>
        <taxon>Bacillota</taxon>
        <taxon>Bacilli</taxon>
        <taxon>Lactobacillales</taxon>
        <taxon>Streptococcaceae</taxon>
        <taxon>Streptococcus</taxon>
    </lineage>
</organism>
<proteinExistence type="inferred from homology"/>